<organism>
    <name type="scientific">Staphylococcus aureus</name>
    <dbReference type="NCBI Taxonomy" id="1280"/>
    <lineage>
        <taxon>Bacteria</taxon>
        <taxon>Bacillati</taxon>
        <taxon>Bacillota</taxon>
        <taxon>Bacilli</taxon>
        <taxon>Bacillales</taxon>
        <taxon>Staphylococcaceae</taxon>
        <taxon>Staphylococcus</taxon>
    </lineage>
</organism>
<accession>Q9AIV3</accession>
<accession>Q9AQR6</accession>
<sequence>MNQEVKNKIFSILKITFATALFIFVAITLYRELSGINFKDTLVEFSKINRMSLVLLFIGGGASLVILSMYDVILSRALKMDISLGKVLRVSYIINALNAIVGFGGFIGAGVRAMVYKNYTHDKKKLVHFISLILISMLTGLSLLSLLIVFHVFDASLILDKITWVRWVLYVVSFFLPLFIIYSMVRPPDKNNRFVGLYCTLVSCVEWLAAAVVLYFCGVIVDAHVSFMSFIAIFIIAALSGLVSFIPGGFGAFDLVVLLGFKTLGVPEEKVLLMLLLYRFAYYFVPVIIALILSSFEFGTSAKKYIEGSKYFIPAKDVTSFLMSYQKDIIAKIPSLSLAILVFFTSMIFFVNNLTIVYDALYDGNHLTYYILLAIHTSACLLLLLNVVGIYKQSRRAIIFAMISILLITVATFFTYASYILITWLAIIFVLLIVAFRRARRLKRPVRMRNIVAMLLFSLFILYVNHIFIAGTLYALDIYTIEMHTSVLRYYFWLTILIIAIIIGMIAWLFDYQFSKVRISSKIEDCEEIINQYGGNYLSHLIYSGDKQFFTNENKTAFLMYRYKASSLVVLGDPLGDENAFDELLEAFYNYAEYLGYDVIFYQVTDQHMPLYHNFGNQFFKLGEEAIIDLTQFSTSGKKRRGFRATLNKFDELNISFEIIEPPFSTEFINELQHVSDLWLDNRQEMHFSVGEFNEEYLSKAPIGVMRNEENEVIAFCSLMPTYFNDAISVDLIRWLPELDLPLMDGLYLHMLLWSKEQGYTKFNMGMATLSNVGQLHYSYLRERLAGRVFEHFNGLYRFQGLRRYKSKYNPNWEPRFLVYRKDNSLWESLSKVMRVIRHK</sequence>
<reference key="1">
    <citation type="journal article" date="2001" name="FEMS Microbiol. Lett.">
        <title>Cloning and sequencing of the gene, fmtC, which affects oxacillin resistance in methicillin-resistant Staphylococcus aureus.</title>
        <authorList>
            <person name="Komatsuzawa H."/>
            <person name="Ohta K."/>
            <person name="Fujiwara T."/>
            <person name="Choi G.H."/>
            <person name="Labischinski H."/>
            <person name="Sugai M."/>
        </authorList>
    </citation>
    <scope>NUCLEOTIDE SEQUENCE [GENOMIC DNA]</scope>
    <scope>ANTIMICROBIAL PEPTIDES RESISTANCE</scope>
    <source>
        <strain>ISP3</strain>
        <strain>KSA8</strain>
    </source>
</reference>
<reference key="2">
    <citation type="journal article" date="2004" name="Antimicrob. Agents Chemother.">
        <title>Reduced content of lysyl-phosphatidylglycerol in the cytoplasmic membrane affects susceptibility to moenomycin, as well as vancomycin, gentamicin, and antimicrobial peptides, in Staphylococcus aureus.</title>
        <authorList>
            <person name="Nishi H."/>
            <person name="Komatsuzawa H."/>
            <person name="Fujiwara T."/>
            <person name="McCallum N."/>
            <person name="Sugai M."/>
        </authorList>
    </citation>
    <scope>ANTIMICROBIAL PEPTIDES RESISTANCE</scope>
    <source>
        <strain>KSA8</strain>
    </source>
</reference>
<name>MPRF_STAAU</name>
<feature type="chain" id="PRO_0000096564" description="Phosphatidylglycerol lysyltransferase">
    <location>
        <begin position="1"/>
        <end position="840"/>
    </location>
</feature>
<feature type="topological domain" description="Cytoplasmic" evidence="1">
    <location>
        <begin position="1"/>
        <end position="8"/>
    </location>
</feature>
<feature type="transmembrane region" description="Helical" evidence="1">
    <location>
        <begin position="9"/>
        <end position="29"/>
    </location>
</feature>
<feature type="topological domain" description="Extracellular" evidence="1">
    <location>
        <begin position="30"/>
        <end position="52"/>
    </location>
</feature>
<feature type="transmembrane region" description="Helical" evidence="1">
    <location>
        <begin position="53"/>
        <end position="73"/>
    </location>
</feature>
<feature type="topological domain" description="Cytoplasmic" evidence="1">
    <location>
        <begin position="74"/>
        <end position="89"/>
    </location>
</feature>
<feature type="transmembrane region" description="Helical" evidence="1">
    <location>
        <begin position="90"/>
        <end position="110"/>
    </location>
</feature>
<feature type="topological domain" description="Extracellular" evidence="1">
    <location>
        <begin position="111"/>
        <end position="128"/>
    </location>
</feature>
<feature type="transmembrane region" description="Helical" evidence="1">
    <location>
        <begin position="129"/>
        <end position="149"/>
    </location>
</feature>
<feature type="topological domain" description="Cytoplasmic" evidence="1">
    <location>
        <begin position="150"/>
        <end position="161"/>
    </location>
</feature>
<feature type="transmembrane region" description="Helical" evidence="1">
    <location>
        <begin position="162"/>
        <end position="182"/>
    </location>
</feature>
<feature type="topological domain" description="Extracellular" evidence="1">
    <location>
        <begin position="183"/>
        <end position="200"/>
    </location>
</feature>
<feature type="transmembrane region" description="Helical" evidence="1">
    <location>
        <begin position="201"/>
        <end position="221"/>
    </location>
</feature>
<feature type="topological domain" description="Cytoplasmic" evidence="1">
    <location>
        <begin position="222"/>
        <end position="229"/>
    </location>
</feature>
<feature type="transmembrane region" description="Helical" evidence="1">
    <location>
        <begin position="230"/>
        <end position="250"/>
    </location>
</feature>
<feature type="topological domain" description="Extracellular" evidence="1">
    <location>
        <begin position="251"/>
        <end position="271"/>
    </location>
</feature>
<feature type="transmembrane region" description="Helical" evidence="1">
    <location>
        <begin position="272"/>
        <end position="292"/>
    </location>
</feature>
<feature type="topological domain" description="Cytoplasmic" evidence="1">
    <location>
        <begin position="293"/>
        <end position="337"/>
    </location>
</feature>
<feature type="transmembrane region" description="Helical" evidence="1">
    <location>
        <begin position="338"/>
        <end position="358"/>
    </location>
</feature>
<feature type="topological domain" description="Extracellular" evidence="1">
    <location>
        <begin position="359"/>
        <end position="369"/>
    </location>
</feature>
<feature type="transmembrane region" description="Helical" evidence="1">
    <location>
        <begin position="370"/>
        <end position="390"/>
    </location>
</feature>
<feature type="topological domain" description="Cytoplasmic" evidence="1">
    <location>
        <begin position="391"/>
        <end position="394"/>
    </location>
</feature>
<feature type="transmembrane region" description="Helical" evidence="1">
    <location>
        <begin position="395"/>
        <end position="415"/>
    </location>
</feature>
<feature type="transmembrane region" description="Helical" evidence="1">
    <location>
        <begin position="416"/>
        <end position="436"/>
    </location>
</feature>
<feature type="topological domain" description="Cytoplasmic" evidence="1">
    <location>
        <begin position="437"/>
        <end position="450"/>
    </location>
</feature>
<feature type="transmembrane region" description="Helical" evidence="1">
    <location>
        <begin position="451"/>
        <end position="471"/>
    </location>
</feature>
<feature type="topological domain" description="Extracellular" evidence="1">
    <location>
        <begin position="472"/>
        <end position="489"/>
    </location>
</feature>
<feature type="transmembrane region" description="Helical" evidence="1">
    <location>
        <begin position="490"/>
        <end position="510"/>
    </location>
</feature>
<feature type="topological domain" description="Cytoplasmic" evidence="1">
    <location>
        <begin position="511"/>
        <end position="840"/>
    </location>
</feature>
<feature type="sequence variant" description="In strain: KSA8.">
    <original>A</original>
    <variation>V</variation>
    <location>
        <position position="26"/>
    </location>
</feature>
<feature type="sequence variant" description="In strain: KSA8.">
    <original>S</original>
    <variation>L</variation>
    <location>
        <position position="335"/>
    </location>
</feature>
<feature type="sequence variant" description="In strain: KSA8.">
    <original>E</original>
    <variation>Q</variation>
    <location>
        <position position="692"/>
    </location>
</feature>
<evidence type="ECO:0000255" key="1"/>
<evidence type="ECO:0000305" key="2"/>
<comment type="function">
    <text>Catalyzes the transfer of a lysyl group from L-lysyl-tRNA(Lys) to membrane-bound phosphatidylglycerol (PG), which produces lysylphosphatidylglycerol (LPG), a major component of the bacterial membrane with a positive net charge. LPG synthesis contributes to bacterial virulence as it is involved in the resistance mechanism against cationic antimicrobial peptides (CAMP) produces by the host's immune system (defensins, cathelicidins) and by the competing microorganisms (bacteriocins). In fact, the modification of anionic phosphatidylglycerol with positively charged L-lysine results in repulsion of the peptides. Consequently, MprF is shown to affect resistance and susceptibility to moenomycin and vancomycin, resistance to human defensins (HNP1-3) and evasion of oxygen-independent neutrophil killing and susceptibility to methicillin, oxacillin, bacitracin, gentamicin, beta-lactams and synthetic peptides (hBD3, CAP18) and other cationic antimicrobial peptides.</text>
</comment>
<comment type="catalytic activity">
    <reaction>
        <text>L-lysyl-tRNA(Lys) + a 1,2-diacyl-sn-glycero-3-phospho-(1'-sn-glycerol) = a 1,2-diacyl-sn-glycero-3-phospho-1'-(3'-O-L-lysyl)-sn-glycerol + tRNA(Lys)</text>
        <dbReference type="Rhea" id="RHEA:10668"/>
        <dbReference type="Rhea" id="RHEA-COMP:9696"/>
        <dbReference type="Rhea" id="RHEA-COMP:9697"/>
        <dbReference type="ChEBI" id="CHEBI:64716"/>
        <dbReference type="ChEBI" id="CHEBI:75792"/>
        <dbReference type="ChEBI" id="CHEBI:78442"/>
        <dbReference type="ChEBI" id="CHEBI:78529"/>
        <dbReference type="EC" id="2.3.2.3"/>
    </reaction>
</comment>
<comment type="subcellular location">
    <subcellularLocation>
        <location>Cell membrane</location>
        <topology>Multi-pass membrane protein</topology>
    </subcellularLocation>
</comment>
<comment type="similarity">
    <text evidence="2">Belongs to the LPG synthase family.</text>
</comment>
<gene>
    <name type="primary">mprF</name>
    <name type="synonym">fmtC</name>
</gene>
<keyword id="KW-0046">Antibiotic resistance</keyword>
<keyword id="KW-1003">Cell membrane</keyword>
<keyword id="KW-0443">Lipid metabolism</keyword>
<keyword id="KW-0472">Membrane</keyword>
<keyword id="KW-0808">Transferase</keyword>
<keyword id="KW-0812">Transmembrane</keyword>
<keyword id="KW-1133">Transmembrane helix</keyword>
<keyword id="KW-0843">Virulence</keyword>
<protein>
    <recommendedName>
        <fullName>Phosphatidylglycerol lysyltransferase</fullName>
        <ecNumber>2.3.2.3</ecNumber>
    </recommendedName>
    <alternativeName>
        <fullName>Lysylphosphatidylglycerol synthase</fullName>
        <shortName>LPG synthase</shortName>
    </alternativeName>
    <alternativeName>
        <fullName>Multiple peptide resistance factor</fullName>
    </alternativeName>
</protein>
<proteinExistence type="inferred from homology"/>
<dbReference type="EC" id="2.3.2.3"/>
<dbReference type="EMBL" id="AB043507">
    <property type="protein sequence ID" value="BAB21440.1"/>
    <property type="molecule type" value="Genomic_DNA"/>
</dbReference>
<dbReference type="EMBL" id="AF233369">
    <property type="protein sequence ID" value="AAK15004.1"/>
    <property type="molecule type" value="Genomic_DNA"/>
</dbReference>
<dbReference type="RefSeq" id="WP_001071135.1">
    <property type="nucleotide sequence ID" value="NZ_WWFR01000003.1"/>
</dbReference>
<dbReference type="SMR" id="Q9AIV3"/>
<dbReference type="OMA" id="WEPRYMA"/>
<dbReference type="GO" id="GO:0005886">
    <property type="term" value="C:plasma membrane"/>
    <property type="evidence" value="ECO:0007669"/>
    <property type="project" value="UniProtKB-SubCell"/>
</dbReference>
<dbReference type="GO" id="GO:0050071">
    <property type="term" value="F:phosphatidylglycerol lysyltransferase activity"/>
    <property type="evidence" value="ECO:0007669"/>
    <property type="project" value="UniProtKB-EC"/>
</dbReference>
<dbReference type="GO" id="GO:0006629">
    <property type="term" value="P:lipid metabolic process"/>
    <property type="evidence" value="ECO:0007669"/>
    <property type="project" value="UniProtKB-KW"/>
</dbReference>
<dbReference type="GO" id="GO:0055091">
    <property type="term" value="P:phospholipid homeostasis"/>
    <property type="evidence" value="ECO:0007669"/>
    <property type="project" value="TreeGrafter"/>
</dbReference>
<dbReference type="GO" id="GO:0046677">
    <property type="term" value="P:response to antibiotic"/>
    <property type="evidence" value="ECO:0007669"/>
    <property type="project" value="UniProtKB-KW"/>
</dbReference>
<dbReference type="InterPro" id="IPR016181">
    <property type="entry name" value="Acyl_CoA_acyltransferase"/>
</dbReference>
<dbReference type="InterPro" id="IPR022791">
    <property type="entry name" value="L-PG_synthase/AglD"/>
</dbReference>
<dbReference type="InterPro" id="IPR024320">
    <property type="entry name" value="LPG_synthase_C"/>
</dbReference>
<dbReference type="InterPro" id="IPR051211">
    <property type="entry name" value="PG_lysyltransferase"/>
</dbReference>
<dbReference type="NCBIfam" id="NF033480">
    <property type="entry name" value="bifunc_MprF"/>
    <property type="match status" value="1"/>
</dbReference>
<dbReference type="NCBIfam" id="TIGR00374">
    <property type="entry name" value="flippase-like domain"/>
    <property type="match status" value="1"/>
</dbReference>
<dbReference type="PANTHER" id="PTHR34697">
    <property type="entry name" value="PHOSPHATIDYLGLYCEROL LYSYLTRANSFERASE"/>
    <property type="match status" value="1"/>
</dbReference>
<dbReference type="PANTHER" id="PTHR34697:SF2">
    <property type="entry name" value="PHOSPHATIDYLGLYCEROL LYSYLTRANSFERASE"/>
    <property type="match status" value="1"/>
</dbReference>
<dbReference type="Pfam" id="PF09924">
    <property type="entry name" value="LPG_synthase_C"/>
    <property type="match status" value="1"/>
</dbReference>
<dbReference type="Pfam" id="PF03706">
    <property type="entry name" value="LPG_synthase_TM"/>
    <property type="match status" value="1"/>
</dbReference>
<dbReference type="SUPFAM" id="SSF55729">
    <property type="entry name" value="Acyl-CoA N-acyltransferases (Nat)"/>
    <property type="match status" value="1"/>
</dbReference>